<protein>
    <recommendedName>
        <fullName evidence="1">ATP synthase subunit b</fullName>
    </recommendedName>
    <alternativeName>
        <fullName evidence="1">ATP synthase F(0) sector subunit b</fullName>
    </alternativeName>
    <alternativeName>
        <fullName evidence="1">ATPase subunit I</fullName>
    </alternativeName>
    <alternativeName>
        <fullName evidence="1">F-type ATPase subunit b</fullName>
        <shortName evidence="1">F-ATPase subunit b</shortName>
    </alternativeName>
</protein>
<evidence type="ECO:0000255" key="1">
    <source>
        <dbReference type="HAMAP-Rule" id="MF_01398"/>
    </source>
</evidence>
<sequence>MANSIYNLAHADALPLESGNSILFPPLYDIVWSLIPFLIILIVFWKLVLPKFQEVLTEREDRIKGGIQRAEAAQAEAKAALEKYNAQLAEARTEAAEIREQARERGKQIEAELKDKANEESNRIIESGSKQLLAQREQVVNELRREMGQNSINLAEHLLGDQLSDNVKRSGTIDRFLADLDTVAPNGK</sequence>
<dbReference type="EMBL" id="AP009044">
    <property type="protein sequence ID" value="BAF54266.1"/>
    <property type="molecule type" value="Genomic_DNA"/>
</dbReference>
<dbReference type="RefSeq" id="WP_003854847.1">
    <property type="nucleotide sequence ID" value="NC_009342.1"/>
</dbReference>
<dbReference type="SMR" id="A4QDG9"/>
<dbReference type="KEGG" id="cgt:cgR_1286"/>
<dbReference type="HOGENOM" id="CLU_079215_5_2_11"/>
<dbReference type="PhylomeDB" id="A4QDG9"/>
<dbReference type="Proteomes" id="UP000006698">
    <property type="component" value="Chromosome"/>
</dbReference>
<dbReference type="GO" id="GO:0005886">
    <property type="term" value="C:plasma membrane"/>
    <property type="evidence" value="ECO:0007669"/>
    <property type="project" value="UniProtKB-SubCell"/>
</dbReference>
<dbReference type="GO" id="GO:0045259">
    <property type="term" value="C:proton-transporting ATP synthase complex"/>
    <property type="evidence" value="ECO:0007669"/>
    <property type="project" value="UniProtKB-KW"/>
</dbReference>
<dbReference type="GO" id="GO:0046933">
    <property type="term" value="F:proton-transporting ATP synthase activity, rotational mechanism"/>
    <property type="evidence" value="ECO:0007669"/>
    <property type="project" value="UniProtKB-UniRule"/>
</dbReference>
<dbReference type="GO" id="GO:0046961">
    <property type="term" value="F:proton-transporting ATPase activity, rotational mechanism"/>
    <property type="evidence" value="ECO:0007669"/>
    <property type="project" value="TreeGrafter"/>
</dbReference>
<dbReference type="CDD" id="cd06503">
    <property type="entry name" value="ATP-synt_Fo_b"/>
    <property type="match status" value="1"/>
</dbReference>
<dbReference type="Gene3D" id="1.20.5.620">
    <property type="entry name" value="F1F0 ATP synthase subunit B, membrane domain"/>
    <property type="match status" value="1"/>
</dbReference>
<dbReference type="HAMAP" id="MF_01398">
    <property type="entry name" value="ATP_synth_b_bprime"/>
    <property type="match status" value="1"/>
</dbReference>
<dbReference type="InterPro" id="IPR028987">
    <property type="entry name" value="ATP_synth_B-like_membr_sf"/>
</dbReference>
<dbReference type="InterPro" id="IPR002146">
    <property type="entry name" value="ATP_synth_b/b'su_bac/chlpt"/>
</dbReference>
<dbReference type="InterPro" id="IPR005864">
    <property type="entry name" value="ATP_synth_F0_bsu_bac"/>
</dbReference>
<dbReference type="InterPro" id="IPR050059">
    <property type="entry name" value="ATP_synthase_B_chain"/>
</dbReference>
<dbReference type="NCBIfam" id="TIGR01144">
    <property type="entry name" value="ATP_synt_b"/>
    <property type="match status" value="1"/>
</dbReference>
<dbReference type="NCBIfam" id="NF004412">
    <property type="entry name" value="PRK05759.1-3"/>
    <property type="match status" value="1"/>
</dbReference>
<dbReference type="PANTHER" id="PTHR33445:SF1">
    <property type="entry name" value="ATP SYNTHASE SUBUNIT B"/>
    <property type="match status" value="1"/>
</dbReference>
<dbReference type="PANTHER" id="PTHR33445">
    <property type="entry name" value="ATP SYNTHASE SUBUNIT B', CHLOROPLASTIC"/>
    <property type="match status" value="1"/>
</dbReference>
<dbReference type="Pfam" id="PF00430">
    <property type="entry name" value="ATP-synt_B"/>
    <property type="match status" value="1"/>
</dbReference>
<dbReference type="SUPFAM" id="SSF81573">
    <property type="entry name" value="F1F0 ATP synthase subunit B, membrane domain"/>
    <property type="match status" value="1"/>
</dbReference>
<gene>
    <name evidence="1" type="primary">atpF</name>
    <name type="ordered locus">cgR_1286</name>
</gene>
<proteinExistence type="inferred from homology"/>
<keyword id="KW-0066">ATP synthesis</keyword>
<keyword id="KW-1003">Cell membrane</keyword>
<keyword id="KW-0138">CF(0)</keyword>
<keyword id="KW-0375">Hydrogen ion transport</keyword>
<keyword id="KW-0406">Ion transport</keyword>
<keyword id="KW-0472">Membrane</keyword>
<keyword id="KW-0812">Transmembrane</keyword>
<keyword id="KW-1133">Transmembrane helix</keyword>
<keyword id="KW-0813">Transport</keyword>
<reference key="1">
    <citation type="journal article" date="2007" name="Microbiology">
        <title>Comparative analysis of the Corynebacterium glutamicum group and complete genome sequence of strain R.</title>
        <authorList>
            <person name="Yukawa H."/>
            <person name="Omumasaba C.A."/>
            <person name="Nonaka H."/>
            <person name="Kos P."/>
            <person name="Okai N."/>
            <person name="Suzuki N."/>
            <person name="Suda M."/>
            <person name="Tsuge Y."/>
            <person name="Watanabe J."/>
            <person name="Ikeda Y."/>
            <person name="Vertes A.A."/>
            <person name="Inui M."/>
        </authorList>
    </citation>
    <scope>NUCLEOTIDE SEQUENCE [LARGE SCALE GENOMIC DNA]</scope>
    <source>
        <strain>R</strain>
    </source>
</reference>
<organism>
    <name type="scientific">Corynebacterium glutamicum (strain R)</name>
    <dbReference type="NCBI Taxonomy" id="340322"/>
    <lineage>
        <taxon>Bacteria</taxon>
        <taxon>Bacillati</taxon>
        <taxon>Actinomycetota</taxon>
        <taxon>Actinomycetes</taxon>
        <taxon>Mycobacteriales</taxon>
        <taxon>Corynebacteriaceae</taxon>
        <taxon>Corynebacterium</taxon>
    </lineage>
</organism>
<name>ATPF_CORGB</name>
<accession>A4QDG9</accession>
<feature type="chain" id="PRO_0000368439" description="ATP synthase subunit b">
    <location>
        <begin position="1"/>
        <end position="188"/>
    </location>
</feature>
<feature type="transmembrane region" description="Helical" evidence="1">
    <location>
        <begin position="30"/>
        <end position="50"/>
    </location>
</feature>
<comment type="function">
    <text evidence="1">F(1)F(0) ATP synthase produces ATP from ADP in the presence of a proton or sodium gradient. F-type ATPases consist of two structural domains, F(1) containing the extramembraneous catalytic core and F(0) containing the membrane proton channel, linked together by a central stalk and a peripheral stalk. During catalysis, ATP synthesis in the catalytic domain of F(1) is coupled via a rotary mechanism of the central stalk subunits to proton translocation.</text>
</comment>
<comment type="function">
    <text evidence="1">Component of the F(0) channel, it forms part of the peripheral stalk, linking F(1) to F(0).</text>
</comment>
<comment type="subunit">
    <text evidence="1">F-type ATPases have 2 components, F(1) - the catalytic core - and F(0) - the membrane proton channel. F(1) has five subunits: alpha(3), beta(3), gamma(1), delta(1), epsilon(1). F(0) has three main subunits: a(1), b(2) and c(10-14). The alpha and beta chains form an alternating ring which encloses part of the gamma chain. F(1) is attached to F(0) by a central stalk formed by the gamma and epsilon chains, while a peripheral stalk is formed by the delta and b chains.</text>
</comment>
<comment type="subcellular location">
    <subcellularLocation>
        <location evidence="1">Cell membrane</location>
        <topology evidence="1">Single-pass membrane protein</topology>
    </subcellularLocation>
</comment>
<comment type="similarity">
    <text evidence="1">Belongs to the ATPase B chain family.</text>
</comment>